<evidence type="ECO:0000255" key="1">
    <source>
        <dbReference type="HAMAP-Rule" id="MF_00379"/>
    </source>
</evidence>
<protein>
    <recommendedName>
        <fullName evidence="1">tRNA modification GTPase MnmE</fullName>
        <ecNumber evidence="1">3.6.-.-</ecNumber>
    </recommendedName>
</protein>
<proteinExistence type="inferred from homology"/>
<reference key="1">
    <citation type="journal article" date="2004" name="Nucleic Acids Res.">
        <title>The genome sequence of Bacillus cereus ATCC 10987 reveals metabolic adaptations and a large plasmid related to Bacillus anthracis pXO1.</title>
        <authorList>
            <person name="Rasko D.A."/>
            <person name="Ravel J."/>
            <person name="Oekstad O.A."/>
            <person name="Helgason E."/>
            <person name="Cer R.Z."/>
            <person name="Jiang L."/>
            <person name="Shores K.A."/>
            <person name="Fouts D.E."/>
            <person name="Tourasse N.J."/>
            <person name="Angiuoli S.V."/>
            <person name="Kolonay J.F."/>
            <person name="Nelson W.C."/>
            <person name="Kolstoe A.-B."/>
            <person name="Fraser C.M."/>
            <person name="Read T.D."/>
        </authorList>
    </citation>
    <scope>NUCLEOTIDE SEQUENCE [LARGE SCALE GENOMIC DNA]</scope>
    <source>
        <strain>ATCC 10987 / NRS 248</strain>
    </source>
</reference>
<feature type="chain" id="PRO_1000048798" description="tRNA modification GTPase MnmE">
    <location>
        <begin position="1"/>
        <end position="458"/>
    </location>
</feature>
<feature type="domain" description="TrmE-type G">
    <location>
        <begin position="220"/>
        <end position="379"/>
    </location>
</feature>
<feature type="binding site" evidence="1">
    <location>
        <position position="22"/>
    </location>
    <ligand>
        <name>(6S)-5-formyl-5,6,7,8-tetrahydrofolate</name>
        <dbReference type="ChEBI" id="CHEBI:57457"/>
    </ligand>
</feature>
<feature type="binding site" evidence="1">
    <location>
        <position position="84"/>
    </location>
    <ligand>
        <name>(6S)-5-formyl-5,6,7,8-tetrahydrofolate</name>
        <dbReference type="ChEBI" id="CHEBI:57457"/>
    </ligand>
</feature>
<feature type="binding site" evidence="1">
    <location>
        <position position="123"/>
    </location>
    <ligand>
        <name>(6S)-5-formyl-5,6,7,8-tetrahydrofolate</name>
        <dbReference type="ChEBI" id="CHEBI:57457"/>
    </ligand>
</feature>
<feature type="binding site" evidence="1">
    <location>
        <begin position="230"/>
        <end position="235"/>
    </location>
    <ligand>
        <name>GTP</name>
        <dbReference type="ChEBI" id="CHEBI:37565"/>
    </ligand>
</feature>
<feature type="binding site" evidence="1">
    <location>
        <position position="230"/>
    </location>
    <ligand>
        <name>K(+)</name>
        <dbReference type="ChEBI" id="CHEBI:29103"/>
    </ligand>
</feature>
<feature type="binding site" evidence="1">
    <location>
        <position position="234"/>
    </location>
    <ligand>
        <name>Mg(2+)</name>
        <dbReference type="ChEBI" id="CHEBI:18420"/>
    </ligand>
</feature>
<feature type="binding site" evidence="1">
    <location>
        <begin position="249"/>
        <end position="255"/>
    </location>
    <ligand>
        <name>GTP</name>
        <dbReference type="ChEBI" id="CHEBI:37565"/>
    </ligand>
</feature>
<feature type="binding site" evidence="1">
    <location>
        <position position="249"/>
    </location>
    <ligand>
        <name>K(+)</name>
        <dbReference type="ChEBI" id="CHEBI:29103"/>
    </ligand>
</feature>
<feature type="binding site" evidence="1">
    <location>
        <position position="251"/>
    </location>
    <ligand>
        <name>K(+)</name>
        <dbReference type="ChEBI" id="CHEBI:29103"/>
    </ligand>
</feature>
<feature type="binding site" evidence="1">
    <location>
        <position position="254"/>
    </location>
    <ligand>
        <name>K(+)</name>
        <dbReference type="ChEBI" id="CHEBI:29103"/>
    </ligand>
</feature>
<feature type="binding site" evidence="1">
    <location>
        <position position="255"/>
    </location>
    <ligand>
        <name>Mg(2+)</name>
        <dbReference type="ChEBI" id="CHEBI:18420"/>
    </ligand>
</feature>
<feature type="binding site" evidence="1">
    <location>
        <begin position="274"/>
        <end position="277"/>
    </location>
    <ligand>
        <name>GTP</name>
        <dbReference type="ChEBI" id="CHEBI:37565"/>
    </ligand>
</feature>
<feature type="binding site" evidence="1">
    <location>
        <position position="458"/>
    </location>
    <ligand>
        <name>(6S)-5-formyl-5,6,7,8-tetrahydrofolate</name>
        <dbReference type="ChEBI" id="CHEBI:57457"/>
    </ligand>
</feature>
<gene>
    <name evidence="1" type="primary">mnmE</name>
    <name evidence="1" type="synonym">trmE</name>
    <name type="ordered locus">BCE_5635</name>
</gene>
<accession>Q72WU3</accession>
<sequence length="458" mass="50518">MEFDTIAAISTALGEGAIAIVRVSGDDAVEKVNRIFKGKDLTEVPSHTIHYGHIVDLDTNQVIEEVMVSIMRAPRTFTRENIVEINCHGGLVSVNKVLQLILAQGVRLAEPGEFTKRAFLNGRIDLSQAEAVMDLIRAKTDRAMNVAINQMEGRLSKLIGRLRQDILETLAHVEVNIDYPEYDDVEEMTHNILIEKATHVRAEIAKILETSKQGKILREGIATAIIGRPNVGKSSLLNSLVQEKKAIVTDIAGTTRDVIEEYVNVRGVPLKLIDTAGIRETEDVVERIGVERSKEMMSQADLVLVVVNYSEALTNEDEDLFRAVQGKDFIVIVNKTDLPQAIDMERVIELAAGNRIITTSLIEEQGIDELETAIADLFFEGTIDSADVTYVSNARHIGLLTQAGKTIGDAIEAIENGVPIDMVQIDLTRTWEILGEITGDTVHESLIDQLFSQFCLGK</sequence>
<dbReference type="EC" id="3.6.-.-" evidence="1"/>
<dbReference type="EMBL" id="AE017194">
    <property type="protein sequence ID" value="AAS44535.1"/>
    <property type="molecule type" value="Genomic_DNA"/>
</dbReference>
<dbReference type="SMR" id="Q72WU3"/>
<dbReference type="KEGG" id="bca:BCE_5635"/>
<dbReference type="HOGENOM" id="CLU_019624_4_1_9"/>
<dbReference type="Proteomes" id="UP000002527">
    <property type="component" value="Chromosome"/>
</dbReference>
<dbReference type="GO" id="GO:0005829">
    <property type="term" value="C:cytosol"/>
    <property type="evidence" value="ECO:0007669"/>
    <property type="project" value="TreeGrafter"/>
</dbReference>
<dbReference type="GO" id="GO:0005525">
    <property type="term" value="F:GTP binding"/>
    <property type="evidence" value="ECO:0007669"/>
    <property type="project" value="UniProtKB-UniRule"/>
</dbReference>
<dbReference type="GO" id="GO:0003924">
    <property type="term" value="F:GTPase activity"/>
    <property type="evidence" value="ECO:0007669"/>
    <property type="project" value="UniProtKB-UniRule"/>
</dbReference>
<dbReference type="GO" id="GO:0046872">
    <property type="term" value="F:metal ion binding"/>
    <property type="evidence" value="ECO:0007669"/>
    <property type="project" value="UniProtKB-KW"/>
</dbReference>
<dbReference type="GO" id="GO:0030488">
    <property type="term" value="P:tRNA methylation"/>
    <property type="evidence" value="ECO:0007669"/>
    <property type="project" value="TreeGrafter"/>
</dbReference>
<dbReference type="GO" id="GO:0002098">
    <property type="term" value="P:tRNA wobble uridine modification"/>
    <property type="evidence" value="ECO:0007669"/>
    <property type="project" value="TreeGrafter"/>
</dbReference>
<dbReference type="CDD" id="cd04164">
    <property type="entry name" value="trmE"/>
    <property type="match status" value="1"/>
</dbReference>
<dbReference type="CDD" id="cd14858">
    <property type="entry name" value="TrmE_N"/>
    <property type="match status" value="1"/>
</dbReference>
<dbReference type="FunFam" id="3.30.1360.120:FF:000003">
    <property type="entry name" value="tRNA modification GTPase MnmE"/>
    <property type="match status" value="1"/>
</dbReference>
<dbReference type="FunFam" id="3.40.50.300:FF:000494">
    <property type="entry name" value="tRNA modification GTPase MnmE"/>
    <property type="match status" value="1"/>
</dbReference>
<dbReference type="Gene3D" id="3.40.50.300">
    <property type="entry name" value="P-loop containing nucleotide triphosphate hydrolases"/>
    <property type="match status" value="1"/>
</dbReference>
<dbReference type="Gene3D" id="3.30.1360.120">
    <property type="entry name" value="Probable tRNA modification gtpase trme, domain 1"/>
    <property type="match status" value="1"/>
</dbReference>
<dbReference type="Gene3D" id="1.20.120.430">
    <property type="entry name" value="tRNA modification GTPase MnmE domain 2"/>
    <property type="match status" value="1"/>
</dbReference>
<dbReference type="HAMAP" id="MF_00379">
    <property type="entry name" value="GTPase_MnmE"/>
    <property type="match status" value="1"/>
</dbReference>
<dbReference type="InterPro" id="IPR031168">
    <property type="entry name" value="G_TrmE"/>
</dbReference>
<dbReference type="InterPro" id="IPR006073">
    <property type="entry name" value="GTP-bd"/>
</dbReference>
<dbReference type="InterPro" id="IPR018948">
    <property type="entry name" value="GTP-bd_TrmE_N"/>
</dbReference>
<dbReference type="InterPro" id="IPR004520">
    <property type="entry name" value="GTPase_MnmE"/>
</dbReference>
<dbReference type="InterPro" id="IPR027368">
    <property type="entry name" value="MnmE_dom2"/>
</dbReference>
<dbReference type="InterPro" id="IPR025867">
    <property type="entry name" value="MnmE_helical"/>
</dbReference>
<dbReference type="InterPro" id="IPR027417">
    <property type="entry name" value="P-loop_NTPase"/>
</dbReference>
<dbReference type="InterPro" id="IPR005225">
    <property type="entry name" value="Small_GTP-bd"/>
</dbReference>
<dbReference type="InterPro" id="IPR027266">
    <property type="entry name" value="TrmE/GcvT_dom1"/>
</dbReference>
<dbReference type="NCBIfam" id="TIGR00450">
    <property type="entry name" value="mnmE_trmE_thdF"/>
    <property type="match status" value="1"/>
</dbReference>
<dbReference type="NCBIfam" id="TIGR00231">
    <property type="entry name" value="small_GTP"/>
    <property type="match status" value="1"/>
</dbReference>
<dbReference type="PANTHER" id="PTHR42714">
    <property type="entry name" value="TRNA MODIFICATION GTPASE GTPBP3"/>
    <property type="match status" value="1"/>
</dbReference>
<dbReference type="PANTHER" id="PTHR42714:SF2">
    <property type="entry name" value="TRNA MODIFICATION GTPASE GTPBP3, MITOCHONDRIAL"/>
    <property type="match status" value="1"/>
</dbReference>
<dbReference type="Pfam" id="PF01926">
    <property type="entry name" value="MMR_HSR1"/>
    <property type="match status" value="1"/>
</dbReference>
<dbReference type="Pfam" id="PF12631">
    <property type="entry name" value="MnmE_helical"/>
    <property type="match status" value="1"/>
</dbReference>
<dbReference type="Pfam" id="PF10396">
    <property type="entry name" value="TrmE_N"/>
    <property type="match status" value="1"/>
</dbReference>
<dbReference type="SUPFAM" id="SSF52540">
    <property type="entry name" value="P-loop containing nucleoside triphosphate hydrolases"/>
    <property type="match status" value="1"/>
</dbReference>
<dbReference type="SUPFAM" id="SSF116878">
    <property type="entry name" value="TrmE connector domain"/>
    <property type="match status" value="1"/>
</dbReference>
<dbReference type="PROSITE" id="PS51709">
    <property type="entry name" value="G_TRME"/>
    <property type="match status" value="1"/>
</dbReference>
<name>MNME_BACC1</name>
<comment type="function">
    <text evidence="1">Exhibits a very high intrinsic GTPase hydrolysis rate. Involved in the addition of a carboxymethylaminomethyl (cmnm) group at the wobble position (U34) of certain tRNAs, forming tRNA-cmnm(5)s(2)U34.</text>
</comment>
<comment type="cofactor">
    <cofactor evidence="1">
        <name>K(+)</name>
        <dbReference type="ChEBI" id="CHEBI:29103"/>
    </cofactor>
    <text evidence="1">Binds 1 potassium ion per subunit.</text>
</comment>
<comment type="subunit">
    <text evidence="1">Homodimer. Heterotetramer of two MnmE and two MnmG subunits.</text>
</comment>
<comment type="subcellular location">
    <subcellularLocation>
        <location evidence="1">Cytoplasm</location>
    </subcellularLocation>
</comment>
<comment type="similarity">
    <text evidence="1">Belongs to the TRAFAC class TrmE-Era-EngA-EngB-Septin-like GTPase superfamily. TrmE GTPase family.</text>
</comment>
<organism>
    <name type="scientific">Bacillus cereus (strain ATCC 10987 / NRS 248)</name>
    <dbReference type="NCBI Taxonomy" id="222523"/>
    <lineage>
        <taxon>Bacteria</taxon>
        <taxon>Bacillati</taxon>
        <taxon>Bacillota</taxon>
        <taxon>Bacilli</taxon>
        <taxon>Bacillales</taxon>
        <taxon>Bacillaceae</taxon>
        <taxon>Bacillus</taxon>
        <taxon>Bacillus cereus group</taxon>
    </lineage>
</organism>
<keyword id="KW-0963">Cytoplasm</keyword>
<keyword id="KW-0342">GTP-binding</keyword>
<keyword id="KW-0378">Hydrolase</keyword>
<keyword id="KW-0460">Magnesium</keyword>
<keyword id="KW-0479">Metal-binding</keyword>
<keyword id="KW-0547">Nucleotide-binding</keyword>
<keyword id="KW-0630">Potassium</keyword>
<keyword id="KW-0819">tRNA processing</keyword>